<sequence length="335" mass="37135">MGHPLLLPLLLLLHTCVPASWGLRCMQCKSNGDCRVEECALGQDLCRTTIVRMWEEGEELELVEKSCTHSEKTNRTMSYRTGLKITSLTEVVCGLDLCNQGNSGRAVTFSRSRYLECISCGSSDMSCERGRHQSLQCRSPEEQCLDVVTHWIQEGEEGRPKDDRHLRGCGYLPSCPGSSGFHNNDTFHFLKCCNTTKCNEGPILELENLPQNGHQCYSCKGNSTHGCSSEETFLIDCRGPMNQCLVATGTYEPKNQSYMVRGCVTASMCQRAHLGDAFSMHHINVSCCTESGCNHPDLDIQYRKGAAPQPGPAHLSLTITLLMTARLWGGTLLWT</sequence>
<protein>
    <recommendedName>
        <fullName>Urokinase plasminogen activator surface receptor</fullName>
        <shortName>U-PAR</shortName>
        <shortName>uPAR</shortName>
    </recommendedName>
    <cdAntigenName>CD87</cdAntigenName>
</protein>
<organism>
    <name type="scientific">Macaca fascicularis</name>
    <name type="common">Crab-eating macaque</name>
    <name type="synonym">Cynomolgus monkey</name>
    <dbReference type="NCBI Taxonomy" id="9541"/>
    <lineage>
        <taxon>Eukaryota</taxon>
        <taxon>Metazoa</taxon>
        <taxon>Chordata</taxon>
        <taxon>Craniata</taxon>
        <taxon>Vertebrata</taxon>
        <taxon>Euteleostomi</taxon>
        <taxon>Mammalia</taxon>
        <taxon>Eutheria</taxon>
        <taxon>Euarchontoglires</taxon>
        <taxon>Primates</taxon>
        <taxon>Haplorrhini</taxon>
        <taxon>Catarrhini</taxon>
        <taxon>Cercopithecidae</taxon>
        <taxon>Cercopithecinae</taxon>
        <taxon>Macaca</taxon>
    </lineage>
</organism>
<dbReference type="EMBL" id="AF302073">
    <property type="protein sequence ID" value="AAG40761.1"/>
    <property type="molecule type" value="mRNA"/>
</dbReference>
<dbReference type="RefSeq" id="NP_001274620.1">
    <property type="nucleotide sequence ID" value="NM_001287691.1"/>
</dbReference>
<dbReference type="RefSeq" id="XP_045236366.1">
    <property type="nucleotide sequence ID" value="XM_045380431.2"/>
</dbReference>
<dbReference type="SMR" id="Q9GK78"/>
<dbReference type="STRING" id="9541.ENSMFAP00000025292"/>
<dbReference type="GlyCosmos" id="Q9GK78">
    <property type="glycosylation" value="6 sites, No reported glycans"/>
</dbReference>
<dbReference type="ABCD" id="Q9GK78">
    <property type="antibodies" value="15 sequenced antibodies"/>
</dbReference>
<dbReference type="Ensembl" id="ENSMFAT00000033440.2">
    <property type="protein sequence ID" value="ENSMFAP00000025292.1"/>
    <property type="gene ID" value="ENSMFAG00000044138.2"/>
</dbReference>
<dbReference type="GeneID" id="102139334"/>
<dbReference type="VEuPathDB" id="HostDB:ENSMFAG00000044138"/>
<dbReference type="eggNOG" id="ENOG502S36D">
    <property type="taxonomic scope" value="Eukaryota"/>
</dbReference>
<dbReference type="GeneTree" id="ENSGT00940000153599"/>
<dbReference type="OMA" id="TGNGCNH"/>
<dbReference type="Proteomes" id="UP000233100">
    <property type="component" value="Chromosome 19"/>
</dbReference>
<dbReference type="Bgee" id="ENSMFAG00000044138">
    <property type="expression patterns" value="Expressed in bone marrow and 7 other cell types or tissues"/>
</dbReference>
<dbReference type="GO" id="GO:0070161">
    <property type="term" value="C:anchoring junction"/>
    <property type="evidence" value="ECO:0007669"/>
    <property type="project" value="UniProtKB-KW"/>
</dbReference>
<dbReference type="GO" id="GO:0042995">
    <property type="term" value="C:cell projection"/>
    <property type="evidence" value="ECO:0007669"/>
    <property type="project" value="UniProtKB-SubCell"/>
</dbReference>
<dbReference type="GO" id="GO:0005886">
    <property type="term" value="C:plasma membrane"/>
    <property type="evidence" value="ECO:0007669"/>
    <property type="project" value="UniProtKB-SubCell"/>
</dbReference>
<dbReference type="GO" id="GO:0098552">
    <property type="term" value="C:side of membrane"/>
    <property type="evidence" value="ECO:0007669"/>
    <property type="project" value="UniProtKB-KW"/>
</dbReference>
<dbReference type="CDD" id="cd23556">
    <property type="entry name" value="TFP_LU_ECD_uPAR_rpt1"/>
    <property type="match status" value="1"/>
</dbReference>
<dbReference type="CDD" id="cd23557">
    <property type="entry name" value="TFP_LU_ECD_uPAR_rpt2"/>
    <property type="match status" value="1"/>
</dbReference>
<dbReference type="CDD" id="cd23558">
    <property type="entry name" value="TFP_LU_ECD_uPAR_rpt3"/>
    <property type="match status" value="1"/>
</dbReference>
<dbReference type="FunFam" id="2.10.60.10:FF:000013">
    <property type="entry name" value="Urokinase plasminogen activator surface receptor"/>
    <property type="match status" value="1"/>
</dbReference>
<dbReference type="FunFam" id="2.10.60.10:FF:000015">
    <property type="entry name" value="Urokinase plasminogen activator surface receptor"/>
    <property type="match status" value="1"/>
</dbReference>
<dbReference type="FunFam" id="2.10.60.10:FF:000019">
    <property type="entry name" value="Urokinase plasminogen activator surface receptor"/>
    <property type="match status" value="1"/>
</dbReference>
<dbReference type="Gene3D" id="2.10.60.10">
    <property type="entry name" value="CD59"/>
    <property type="match status" value="3"/>
</dbReference>
<dbReference type="InterPro" id="IPR018363">
    <property type="entry name" value="CD59_antigen_CS"/>
</dbReference>
<dbReference type="InterPro" id="IPR016054">
    <property type="entry name" value="LY6_UPA_recep-like"/>
</dbReference>
<dbReference type="InterPro" id="IPR045860">
    <property type="entry name" value="Snake_toxin-like_sf"/>
</dbReference>
<dbReference type="PANTHER" id="PTHR10624:SF6">
    <property type="entry name" value="UROKINASE PLASMINOGEN ACTIVATOR SURFACE RECEPTOR"/>
    <property type="match status" value="1"/>
</dbReference>
<dbReference type="PANTHER" id="PTHR10624">
    <property type="entry name" value="UROKINASE PLASMINOGEN ACTIVATOR SURFACE RECEPTOR-RELATED"/>
    <property type="match status" value="1"/>
</dbReference>
<dbReference type="Pfam" id="PF00021">
    <property type="entry name" value="UPAR_LY6"/>
    <property type="match status" value="3"/>
</dbReference>
<dbReference type="SMART" id="SM00134">
    <property type="entry name" value="LU"/>
    <property type="match status" value="3"/>
</dbReference>
<dbReference type="SUPFAM" id="SSF57302">
    <property type="entry name" value="Snake toxin-like"/>
    <property type="match status" value="3"/>
</dbReference>
<dbReference type="PROSITE" id="PS00983">
    <property type="entry name" value="LY6_UPAR"/>
    <property type="match status" value="3"/>
</dbReference>
<gene>
    <name type="primary">PLAUR</name>
    <name type="synonym">UPAR</name>
</gene>
<evidence type="ECO:0000250" key="1"/>
<evidence type="ECO:0000250" key="2">
    <source>
        <dbReference type="UniProtKB" id="P49616"/>
    </source>
</evidence>
<evidence type="ECO:0000250" key="3">
    <source>
        <dbReference type="UniProtKB" id="Q03405"/>
    </source>
</evidence>
<evidence type="ECO:0000255" key="4"/>
<evidence type="ECO:0000305" key="5"/>
<proteinExistence type="evidence at transcript level"/>
<comment type="function">
    <text evidence="1">Acts as a receptor for urokinase plasminogen activator. Plays a role in localizing and promoting plasmin formation. Mediates the proteolysis-independent signal transduction activation effects of U-PA. It is subject to negative-feedback regulation by U-PA which cleaves it into an inactive form (By similarity).</text>
</comment>
<comment type="subunit">
    <text evidence="3 5">Monomer (Probable). Interacts (via the UPAR/Ly6 domains) with SRPX2. Interacts with MRC2. Interacts with FAP (seprase); the interaction occurs at the cell surface of invadopodia membrane. Interacts with SORL1 (via N-terminal ectodomain); this interaction decreases PLAUR internalization (By similarity). The ternary complex composed of PLAUR-PLAU-SERPINE1 also interacts with SORL1 (By similarity).</text>
</comment>
<comment type="subcellular location">
    <subcellularLocation>
        <location evidence="3">Cell membrane</location>
    </subcellularLocation>
    <subcellularLocation>
        <location evidence="3">Cell projection</location>
        <location evidence="3">Invadopodium membrane</location>
    </subcellularLocation>
    <subcellularLocation>
        <location evidence="2">Cell membrane</location>
        <topology evidence="2">Lipid-anchor</topology>
        <topology evidence="2">GPI-anchor</topology>
    </subcellularLocation>
    <text evidence="3">Colocalized with FAP (seprase) preferentially at the cell surface of invadopodia membrane in a cytoskeleton-, integrin- and vitronectin-dependent manner.</text>
</comment>
<accession>Q9GK78</accession>
<name>UPAR_MACFA</name>
<feature type="signal peptide" evidence="1">
    <location>
        <begin position="1"/>
        <end position="22"/>
    </location>
</feature>
<feature type="chain" id="PRO_0000036092" description="Urokinase plasminogen activator surface receptor">
    <location>
        <begin position="23"/>
        <end position="305" status="uncertain"/>
    </location>
</feature>
<feature type="propeptide" id="PRO_0000036093" description="Removed in mature form" evidence="4">
    <location>
        <begin position="306" status="uncertain"/>
        <end position="335"/>
    </location>
</feature>
<feature type="domain" description="UPAR/Ly6 1">
    <location>
        <begin position="23"/>
        <end position="114"/>
    </location>
</feature>
<feature type="domain" description="UPAR/Ly6 2">
    <location>
        <begin position="115"/>
        <end position="213"/>
    </location>
</feature>
<feature type="domain" description="UPAR/Ly6 3">
    <location>
        <begin position="214"/>
        <end position="305"/>
    </location>
</feature>
<feature type="site" description="Cleavage; by U-PA" evidence="1">
    <location>
        <begin position="105"/>
        <end position="106"/>
    </location>
</feature>
<feature type="site" description="Cleavage; by U-PA" evidence="1">
    <location>
        <begin position="111"/>
        <end position="112"/>
    </location>
</feature>
<feature type="lipid moiety-binding region" description="GPI-anchor amidated glycine" evidence="4">
    <location>
        <position position="305"/>
    </location>
</feature>
<feature type="glycosylation site" description="N-linked (GlcNAc...) asparagine" evidence="4">
    <location>
        <position position="74"/>
    </location>
</feature>
<feature type="glycosylation site" description="N-linked (GlcNAc...) asparagine" evidence="4">
    <location>
        <position position="184"/>
    </location>
</feature>
<feature type="glycosylation site" description="N-linked (GlcNAc...) asparagine" evidence="4">
    <location>
        <position position="194"/>
    </location>
</feature>
<feature type="glycosylation site" description="N-linked (GlcNAc...) asparagine" evidence="4">
    <location>
        <position position="222"/>
    </location>
</feature>
<feature type="glycosylation site" description="N-linked (GlcNAc...) asparagine" evidence="4">
    <location>
        <position position="255"/>
    </location>
</feature>
<feature type="glycosylation site" description="N-linked (GlcNAc...) asparagine" evidence="4">
    <location>
        <position position="284"/>
    </location>
</feature>
<feature type="disulfide bond" evidence="3">
    <location>
        <begin position="25"/>
        <end position="46"/>
    </location>
</feature>
<feature type="disulfide bond" evidence="3">
    <location>
        <begin position="28"/>
        <end position="34"/>
    </location>
</feature>
<feature type="disulfide bond" evidence="3">
    <location>
        <begin position="39"/>
        <end position="67"/>
    </location>
</feature>
<feature type="disulfide bond" evidence="3">
    <location>
        <begin position="93"/>
        <end position="98"/>
    </location>
</feature>
<feature type="disulfide bond" evidence="3">
    <location>
        <begin position="117"/>
        <end position="144"/>
    </location>
</feature>
<feature type="disulfide bond" evidence="3">
    <location>
        <begin position="120"/>
        <end position="127"/>
    </location>
</feature>
<feature type="disulfide bond" evidence="3">
    <location>
        <begin position="137"/>
        <end position="169"/>
    </location>
</feature>
<feature type="disulfide bond" evidence="3">
    <location>
        <begin position="175"/>
        <end position="192"/>
    </location>
</feature>
<feature type="disulfide bond" evidence="3">
    <location>
        <begin position="193"/>
        <end position="198"/>
    </location>
</feature>
<feature type="disulfide bond" evidence="3">
    <location>
        <begin position="216"/>
        <end position="244"/>
    </location>
</feature>
<feature type="disulfide bond" evidence="3">
    <location>
        <begin position="219"/>
        <end position="227"/>
    </location>
</feature>
<feature type="disulfide bond" evidence="3">
    <location>
        <begin position="237"/>
        <end position="263"/>
    </location>
</feature>
<feature type="disulfide bond" evidence="3">
    <location>
        <begin position="269"/>
        <end position="287"/>
    </location>
</feature>
<feature type="disulfide bond" evidence="3">
    <location>
        <begin position="288"/>
        <end position="293"/>
    </location>
</feature>
<reference key="1">
    <citation type="journal article" date="2001" name="Biol. Chem.">
        <title>Differential binding of urokinase and peptide antagonists to the urokinase receptor: evidence from characterization of the receptor in four primate species.</title>
        <authorList>
            <person name="Engelholm L.H."/>
            <person name="Behrendt N."/>
        </authorList>
    </citation>
    <scope>NUCLEOTIDE SEQUENCE [MRNA]</scope>
</reference>
<keyword id="KW-0965">Cell junction</keyword>
<keyword id="KW-1003">Cell membrane</keyword>
<keyword id="KW-0966">Cell projection</keyword>
<keyword id="KW-1015">Disulfide bond</keyword>
<keyword id="KW-0325">Glycoprotein</keyword>
<keyword id="KW-0336">GPI-anchor</keyword>
<keyword id="KW-0449">Lipoprotein</keyword>
<keyword id="KW-0472">Membrane</keyword>
<keyword id="KW-0675">Receptor</keyword>
<keyword id="KW-1185">Reference proteome</keyword>
<keyword id="KW-0677">Repeat</keyword>
<keyword id="KW-0732">Signal</keyword>